<evidence type="ECO:0000255" key="1"/>
<evidence type="ECO:0000255" key="2">
    <source>
        <dbReference type="PROSITE-ProRule" id="PRU00691"/>
    </source>
</evidence>
<evidence type="ECO:0000305" key="3"/>
<comment type="subcellular location">
    <subcellularLocation>
        <location evidence="3">Secreted</location>
    </subcellularLocation>
</comment>
<comment type="similarity">
    <text evidence="3">Belongs to the thioredoxin family.</text>
</comment>
<gene>
    <name type="primary">bdbA</name>
    <name type="ordered locus">SPBc2p022</name>
</gene>
<organismHost>
    <name type="scientific">Bacillus pumilus</name>
    <name type="common">Bacillus mesentericus</name>
    <dbReference type="NCBI Taxonomy" id="1408"/>
</organismHost>
<organismHost>
    <name type="scientific">Bacillus subtilis</name>
    <dbReference type="NCBI Taxonomy" id="1423"/>
</organismHost>
<keyword id="KW-1015">Disulfide bond</keyword>
<keyword id="KW-0560">Oxidoreductase</keyword>
<keyword id="KW-0676">Redox-active center</keyword>
<keyword id="KW-1185">Reference proteome</keyword>
<keyword id="KW-0964">Secreted</keyword>
<keyword id="KW-0732">Signal</keyword>
<name>BDBA_BPSPB</name>
<protein>
    <recommendedName>
        <fullName>Disulfide bond formation protein A</fullName>
    </recommendedName>
    <alternativeName>
        <fullName>Disulfide oxidoreductase A</fullName>
    </alternativeName>
    <alternativeName>
        <fullName>Thiol-disulfide oxidoreductase A</fullName>
    </alternativeName>
</protein>
<accession>P68570</accession>
<accession>O31987</accession>
<accession>O64035</accession>
<organism>
    <name type="scientific">Bacillus phage SPbeta</name>
    <name type="common">Bacillus phage SPBc2</name>
    <name type="synonym">Bacteriophage SP-beta</name>
    <dbReference type="NCBI Taxonomy" id="2932878"/>
    <lineage>
        <taxon>Viruses</taxon>
        <taxon>Duplodnaviria</taxon>
        <taxon>Heunggongvirae</taxon>
        <taxon>Uroviricota</taxon>
        <taxon>Caudoviricetes</taxon>
        <taxon>Spbetavirus</taxon>
        <taxon>Spbetavirus SPbeta</taxon>
    </lineage>
</organism>
<reference key="1">
    <citation type="journal article" date="1999" name="Microbiology">
        <title>Nucleotide sequence of the Bacillus subtilis temperate bacteriophage SPbetac2.</title>
        <authorList>
            <person name="Lazarevic V."/>
            <person name="Duesterhoeft A."/>
            <person name="Soldo B."/>
            <person name="Hilbert H."/>
            <person name="Mauel C."/>
            <person name="Karamata D."/>
        </authorList>
    </citation>
    <scope>NUCLEOTIDE SEQUENCE [LARGE SCALE GENOMIC DNA]</scope>
</reference>
<proteinExistence type="inferred from homology"/>
<sequence length="137" mass="16182">MKKWIVLFLVLIAAAISIFVYVSTGSEKPFYNDINLTQYQKEVDSKKPKFIYVYETSCPPCQEIKPELNEVIKKEKLKVQALNIEEKENYNTEFLDKYNLNKTPTILYYKDGKEKDRLEGYRSASQIEKFFDKNGDR</sequence>
<dbReference type="EMBL" id="AF020713">
    <property type="protein sequence ID" value="AAC12994.1"/>
    <property type="molecule type" value="Genomic_DNA"/>
</dbReference>
<dbReference type="PIR" id="T12785">
    <property type="entry name" value="T12785"/>
</dbReference>
<dbReference type="SMR" id="P68570"/>
<dbReference type="KEGG" id="vg:1261421"/>
<dbReference type="Proteomes" id="UP000009091">
    <property type="component" value="Genome"/>
</dbReference>
<dbReference type="GO" id="GO:0005576">
    <property type="term" value="C:extracellular region"/>
    <property type="evidence" value="ECO:0007669"/>
    <property type="project" value="UniProtKB-SubCell"/>
</dbReference>
<dbReference type="GO" id="GO:0015035">
    <property type="term" value="F:protein-disulfide reductase activity"/>
    <property type="evidence" value="ECO:0007669"/>
    <property type="project" value="TreeGrafter"/>
</dbReference>
<dbReference type="CDD" id="cd02947">
    <property type="entry name" value="TRX_family"/>
    <property type="match status" value="1"/>
</dbReference>
<dbReference type="Gene3D" id="3.40.30.10">
    <property type="entry name" value="Glutaredoxin"/>
    <property type="match status" value="1"/>
</dbReference>
<dbReference type="InterPro" id="IPR036249">
    <property type="entry name" value="Thioredoxin-like_sf"/>
</dbReference>
<dbReference type="InterPro" id="IPR013766">
    <property type="entry name" value="Thioredoxin_domain"/>
</dbReference>
<dbReference type="PANTHER" id="PTHR45663">
    <property type="entry name" value="GEO12009P1"/>
    <property type="match status" value="1"/>
</dbReference>
<dbReference type="PANTHER" id="PTHR45663:SF11">
    <property type="entry name" value="GEO12009P1"/>
    <property type="match status" value="1"/>
</dbReference>
<dbReference type="Pfam" id="PF00085">
    <property type="entry name" value="Thioredoxin"/>
    <property type="match status" value="1"/>
</dbReference>
<dbReference type="SUPFAM" id="SSF52833">
    <property type="entry name" value="Thioredoxin-like"/>
    <property type="match status" value="1"/>
</dbReference>
<dbReference type="PROSITE" id="PS51352">
    <property type="entry name" value="THIOREDOXIN_2"/>
    <property type="match status" value="1"/>
</dbReference>
<feature type="signal peptide" evidence="1">
    <location>
        <begin position="1"/>
        <end position="25"/>
    </location>
</feature>
<feature type="chain" id="PRO_0000034283" description="Disulfide bond formation protein A">
    <location>
        <begin position="26"/>
        <end position="137"/>
    </location>
</feature>
<feature type="domain" description="Thioredoxin" evidence="2">
    <location>
        <begin position="26"/>
        <end position="136"/>
    </location>
</feature>
<feature type="disulfide bond" description="Redox-active" evidence="2">
    <location>
        <begin position="58"/>
        <end position="61"/>
    </location>
</feature>